<proteinExistence type="evidence at protein level"/>
<keyword id="KW-0002">3D-structure</keyword>
<keyword id="KW-0067">ATP-binding</keyword>
<keyword id="KW-1035">Host cytoplasm</keyword>
<keyword id="KW-0378">Hydrolase</keyword>
<keyword id="KW-0460">Magnesium</keyword>
<keyword id="KW-0479">Metal-binding</keyword>
<keyword id="KW-0547">Nucleotide-binding</keyword>
<keyword id="KW-1185">Reference proteome</keyword>
<keyword id="KW-0694">RNA-binding</keyword>
<name>NSP2_ROTHC</name>
<protein>
    <recommendedName>
        <fullName evidence="1">Non-structural protein 2</fullName>
        <shortName evidence="1">NSP2</shortName>
        <ecNumber evidence="1">3.6.4.-</ecNumber>
    </recommendedName>
    <alternativeName>
        <fullName evidence="1">NCVP3</fullName>
    </alternativeName>
    <alternativeName>
        <fullName evidence="1">Non-structural RNA-binding protein 35</fullName>
        <shortName evidence="1">NS35</shortName>
    </alternativeName>
</protein>
<accession>Q9PY93</accession>
<reference key="1">
    <citation type="journal article" date="1999" name="J. Gen. Virol.">
        <title>Molecular characterization of human group C rotavirus genes 6, 7 and 9.</title>
        <authorList>
            <person name="James V.L."/>
            <person name="Lambden P.R."/>
            <person name="Deng Y."/>
            <person name="Caul E.O."/>
            <person name="Clarke I.N."/>
        </authorList>
    </citation>
    <scope>NUCLEOTIDE SEQUENCE [GENOMIC RNA]</scope>
</reference>
<reference key="2">
    <citation type="journal article" date="2006" name="J. Virol.">
        <title>Structure-function analysis of rotavirus NSP2 octamer by using a novel complementation system.</title>
        <authorList>
            <person name="Taraporewala Z.F."/>
            <person name="Jiang X."/>
            <person name="Vasquez-Del Carpio R."/>
            <person name="Jayaram H."/>
            <person name="Prasad B.V.V."/>
            <person name="Patton J.T."/>
        </authorList>
    </citation>
    <scope>X-RAY CRYSTALLOGRAPHY (2.8 ANGSTROMS)</scope>
    <scope>MUTAGENESIS OF LYS-185 AND HIS-222</scope>
</reference>
<sequence length="312" mass="35915">MAELACFVSFSLTEDKVVWYPINKKAVQTMLCAKVEKDQRSNYYDTILYGVAPPPEFRNRFKTNERYGLDYESDQYTELVNLLADTLNMVSMPTEKFQFDIVKTVVQVRHLENLLCRIKDVNDILNANVKLRVKAVMIACNLVNETETTPLTESNDIVYQDSYFTITKLDYSNHKLLPLMADEYKITINTKTDIPDRNQTAFAAYIRYNFNKFAAISHGKRHWRLVLHSQLMSHAERLDRKIKSDKKHGRQFSYDDGDMAFVHPGWKTCIGQLCGGTTFEVAKTSLYSIKPSKTVRTATNKIESDLISMVGN</sequence>
<organism>
    <name type="scientific">Rotavirus C (isolate RVC/Human/United Kingdom/Bristol/1989)</name>
    <name type="common">RV-C</name>
    <dbReference type="NCBI Taxonomy" id="31567"/>
    <lineage>
        <taxon>Viruses</taxon>
        <taxon>Riboviria</taxon>
        <taxon>Orthornavirae</taxon>
        <taxon>Duplornaviricota</taxon>
        <taxon>Resentoviricetes</taxon>
        <taxon>Reovirales</taxon>
        <taxon>Sedoreoviridae</taxon>
        <taxon>Rotavirus</taxon>
        <taxon>Rotavirus C</taxon>
    </lineage>
</organism>
<comment type="function">
    <text evidence="1">Participates in replication and packaging of the viral genome. Plays a crucial role, together with NSP5, in the formation of virus factories (viroplasms), which are large inclusions in the host cytoplasm where replication intermediates are assembled and viral RNA replication takes place. Displays ssRNA binding, NTPase, RNA triphosphatase (RTPase) and ATP-independent helix-unwinding activities. The unwinding activity may prepare and organize plus-strand RNAs for packaging and replication by removing interfering secondary structures. The RTPase activity plays a role in the removal of the gamma-phosphate from the rotavirus RNA minus strands of dsRNA genome segments. Participates in the selective exclusion of host proteins from stress granules (SG) and P bodies (PB). Also participates in the sequestration of these remodeled organelles in viral factories.</text>
</comment>
<comment type="cofactor">
    <cofactor evidence="1">
        <name>Mg(2+)</name>
        <dbReference type="ChEBI" id="CHEBI:18420"/>
    </cofactor>
</comment>
<comment type="subunit">
    <text evidence="1">Homooctamer. Interacts with VP1; this interaction is weak. Interacts with NSP5; this interaction leads to up-regulation of NSP5 phosphorylation and formation of viral factories. Interacts with host DCP1A, DCP1B, DDX6, EDC4 and EIF2S1/eIF2-alpha; these interactions are probably part of the sequestration of some host SGs and PBs proteins in viral factories.</text>
</comment>
<comment type="subcellular location">
    <subcellularLocation>
        <location evidence="1">Host cytoplasm</location>
    </subcellularLocation>
    <text evidence="1">Found in spherical cytoplasmic structures, called viral factories, that appear early after infection and are the site of viral replication and packaging.</text>
</comment>
<comment type="similarity">
    <text evidence="1">Belongs to the rotavirus NSP2 family.</text>
</comment>
<feature type="chain" id="PRO_0000367815" description="Non-structural protein 2">
    <location>
        <begin position="1"/>
        <end position="312"/>
    </location>
</feature>
<feature type="region of interest" description="RNA-binding" evidence="1">
    <location>
        <begin position="202"/>
        <end position="238"/>
    </location>
</feature>
<feature type="active site" description="For NTPase and RTPase activities" evidence="1">
    <location>
        <position position="222"/>
    </location>
</feature>
<feature type="binding site" evidence="1">
    <location>
        <begin position="107"/>
        <end position="109"/>
    </location>
    <ligand>
        <name>ATP</name>
        <dbReference type="ChEBI" id="CHEBI:30616"/>
    </ligand>
</feature>
<feature type="binding site" evidence="1">
    <location>
        <position position="185"/>
    </location>
    <ligand>
        <name>ATP</name>
        <dbReference type="ChEBI" id="CHEBI:30616"/>
    </ligand>
</feature>
<feature type="binding site" evidence="1">
    <location>
        <begin position="218"/>
        <end position="220"/>
    </location>
    <ligand>
        <name>ATP</name>
        <dbReference type="ChEBI" id="CHEBI:30616"/>
    </ligand>
</feature>
<feature type="binding site" evidence="1">
    <location>
        <position position="224"/>
    </location>
    <ligand>
        <name>ATP</name>
        <dbReference type="ChEBI" id="CHEBI:30616"/>
    </ligand>
</feature>
<feature type="mutagenesis site" description="Loss of NTPase activity and dsRNA synthesis. No effect on octamerization." evidence="2">
    <original>K</original>
    <variation>A</variation>
    <location>
        <position position="185"/>
    </location>
</feature>
<feature type="mutagenesis site" description="Loss of NTPase activity and dsRNA synthesis. No effect on octamerization." evidence="2">
    <original>H</original>
    <variation>A</variation>
    <location>
        <position position="222"/>
    </location>
</feature>
<feature type="helix" evidence="3">
    <location>
        <begin position="4"/>
        <end position="6"/>
    </location>
</feature>
<feature type="strand" evidence="3">
    <location>
        <begin position="8"/>
        <end position="11"/>
    </location>
</feature>
<feature type="strand" evidence="3">
    <location>
        <begin position="13"/>
        <end position="16"/>
    </location>
</feature>
<feature type="strand" evidence="3">
    <location>
        <begin position="18"/>
        <end position="21"/>
    </location>
</feature>
<feature type="helix" evidence="3">
    <location>
        <begin position="24"/>
        <end position="32"/>
    </location>
</feature>
<feature type="helix" evidence="3">
    <location>
        <begin position="37"/>
        <end position="39"/>
    </location>
</feature>
<feature type="strand" evidence="3">
    <location>
        <begin position="47"/>
        <end position="49"/>
    </location>
</feature>
<feature type="helix" evidence="3">
    <location>
        <begin position="55"/>
        <end position="60"/>
    </location>
</feature>
<feature type="helix" evidence="3">
    <location>
        <begin position="74"/>
        <end position="90"/>
    </location>
</feature>
<feature type="helix" evidence="3">
    <location>
        <begin position="94"/>
        <end position="96"/>
    </location>
</feature>
<feature type="helix" evidence="3">
    <location>
        <begin position="99"/>
        <end position="103"/>
    </location>
</feature>
<feature type="helix" evidence="3">
    <location>
        <begin position="108"/>
        <end position="119"/>
    </location>
</feature>
<feature type="helix" evidence="3">
    <location>
        <begin position="124"/>
        <end position="126"/>
    </location>
</feature>
<feature type="helix" evidence="3">
    <location>
        <begin position="129"/>
        <end position="139"/>
    </location>
</feature>
<feature type="helix" evidence="3">
    <location>
        <begin position="149"/>
        <end position="151"/>
    </location>
</feature>
<feature type="strand" evidence="3">
    <location>
        <begin position="157"/>
        <end position="160"/>
    </location>
</feature>
<feature type="strand" evidence="3">
    <location>
        <begin position="162"/>
        <end position="170"/>
    </location>
</feature>
<feature type="strand" evidence="3">
    <location>
        <begin position="175"/>
        <end position="177"/>
    </location>
</feature>
<feature type="strand" evidence="3">
    <location>
        <begin position="182"/>
        <end position="192"/>
    </location>
</feature>
<feature type="helix" evidence="3">
    <location>
        <begin position="196"/>
        <end position="209"/>
    </location>
</feature>
<feature type="strand" evidence="3">
    <location>
        <begin position="213"/>
        <end position="216"/>
    </location>
</feature>
<feature type="strand" evidence="3">
    <location>
        <begin position="218"/>
        <end position="227"/>
    </location>
</feature>
<feature type="helix" evidence="3">
    <location>
        <begin position="228"/>
        <end position="230"/>
    </location>
</feature>
<feature type="helix" evidence="3">
    <location>
        <begin position="231"/>
        <end position="243"/>
    </location>
</feature>
<feature type="helix" evidence="3">
    <location>
        <begin position="264"/>
        <end position="275"/>
    </location>
</feature>
<feature type="helix" evidence="3">
    <location>
        <begin position="279"/>
        <end position="282"/>
    </location>
</feature>
<feature type="helix" evidence="3">
    <location>
        <begin position="285"/>
        <end position="288"/>
    </location>
</feature>
<feature type="helix" evidence="3">
    <location>
        <begin position="293"/>
        <end position="307"/>
    </location>
</feature>
<evidence type="ECO:0000255" key="1">
    <source>
        <dbReference type="HAMAP-Rule" id="MF_04089"/>
    </source>
</evidence>
<evidence type="ECO:0000269" key="2">
    <source>
    </source>
</evidence>
<evidence type="ECO:0007829" key="3">
    <source>
        <dbReference type="PDB" id="2GU0"/>
    </source>
</evidence>
<dbReference type="EC" id="3.6.4.-" evidence="1"/>
<dbReference type="EMBL" id="AJ132205">
    <property type="protein sequence ID" value="CAB52753.1"/>
    <property type="molecule type" value="Genomic_RNA"/>
</dbReference>
<dbReference type="RefSeq" id="YP_392488.1">
    <property type="nucleotide sequence ID" value="NC_007545.1"/>
</dbReference>
<dbReference type="PDB" id="2GU0">
    <property type="method" value="X-ray"/>
    <property type="resolution" value="2.80 A"/>
    <property type="chains" value="A/B=1-312"/>
</dbReference>
<dbReference type="PDBsum" id="2GU0"/>
<dbReference type="SMR" id="Q9PY93"/>
<dbReference type="GeneID" id="3773135"/>
<dbReference type="KEGG" id="vg:3773135"/>
<dbReference type="EvolutionaryTrace" id="Q9PY93"/>
<dbReference type="Proteomes" id="UP000007664">
    <property type="component" value="Genome"/>
</dbReference>
<dbReference type="GO" id="GO:0030430">
    <property type="term" value="C:host cell cytoplasm"/>
    <property type="evidence" value="ECO:0007669"/>
    <property type="project" value="UniProtKB-SubCell"/>
</dbReference>
<dbReference type="GO" id="GO:0005524">
    <property type="term" value="F:ATP binding"/>
    <property type="evidence" value="ECO:0007669"/>
    <property type="project" value="UniProtKB-KW"/>
</dbReference>
<dbReference type="GO" id="GO:0046872">
    <property type="term" value="F:metal ion binding"/>
    <property type="evidence" value="ECO:0007669"/>
    <property type="project" value="UniProtKB-UniRule"/>
</dbReference>
<dbReference type="GO" id="GO:0004550">
    <property type="term" value="F:nucleoside diphosphate kinase activity"/>
    <property type="evidence" value="ECO:0007669"/>
    <property type="project" value="InterPro"/>
</dbReference>
<dbReference type="GO" id="GO:0017111">
    <property type="term" value="F:ribonucleoside triphosphate phosphatase activity"/>
    <property type="evidence" value="ECO:0007669"/>
    <property type="project" value="InterPro"/>
</dbReference>
<dbReference type="GO" id="GO:0003723">
    <property type="term" value="F:RNA binding"/>
    <property type="evidence" value="ECO:0007669"/>
    <property type="project" value="UniProtKB-UniRule"/>
</dbReference>
<dbReference type="GO" id="GO:0019079">
    <property type="term" value="P:viral genome replication"/>
    <property type="evidence" value="ECO:0007669"/>
    <property type="project" value="UniProtKB-UniRule"/>
</dbReference>
<dbReference type="Gene3D" id="3.30.428.20">
    <property type="entry name" value="Rotavirus NSP2 fragment, C-terminal domain"/>
    <property type="match status" value="1"/>
</dbReference>
<dbReference type="Gene3D" id="3.90.1400.10">
    <property type="entry name" value="Rotavirus NSP2 fragment, N-terminal domain"/>
    <property type="match status" value="1"/>
</dbReference>
<dbReference type="HAMAP" id="MF_04089">
    <property type="entry name" value="ROTA_NSP2"/>
    <property type="match status" value="1"/>
</dbReference>
<dbReference type="InterPro" id="IPR048306">
    <property type="entry name" value="Rota_NS35_C"/>
</dbReference>
<dbReference type="InterPro" id="IPR048573">
    <property type="entry name" value="Rota_NS35_N"/>
</dbReference>
<dbReference type="InterPro" id="IPR003668">
    <property type="entry name" value="Rotavirus_NSP2"/>
</dbReference>
<dbReference type="InterPro" id="IPR024076">
    <property type="entry name" value="Rotavirus_NSP2_C"/>
</dbReference>
<dbReference type="InterPro" id="IPR024068">
    <property type="entry name" value="Rotavirus_NSP2_N"/>
</dbReference>
<dbReference type="Pfam" id="PF02509">
    <property type="entry name" value="Rota_NS35_C"/>
    <property type="match status" value="1"/>
</dbReference>
<dbReference type="Pfam" id="PF21067">
    <property type="entry name" value="Rota_NS35_N"/>
    <property type="match status" value="1"/>
</dbReference>
<dbReference type="SUPFAM" id="SSF75347">
    <property type="entry name" value="Rotavirus NSP2 fragment, C-terminal domain"/>
    <property type="match status" value="1"/>
</dbReference>
<dbReference type="SUPFAM" id="SSF75574">
    <property type="entry name" value="Rotavirus NSP2 fragment, N-terminal domain"/>
    <property type="match status" value="1"/>
</dbReference>
<organismHost>
    <name type="scientific">Homo sapiens</name>
    <name type="common">Human</name>
    <dbReference type="NCBI Taxonomy" id="9606"/>
</organismHost>